<comment type="function">
    <text evidence="1 5">Stimulates the transcription of various genes by recognizing and binding to a CCAAT motif in promoters (By similarity). Involved in the blue light (BL) and abscisic acid (ABA) signaling pathways.</text>
</comment>
<comment type="subunit">
    <text evidence="1">Heterotrimeric transcription factor composed of three components, NF-YA, NF-YB and NF-YC. NF-YB and NF-YC must interact and dimerize for NF-YA association and DNA binding (By similarity).</text>
</comment>
<comment type="subcellular location">
    <subcellularLocation>
        <location evidence="6">Nucleus</location>
    </subcellularLocation>
</comment>
<comment type="tissue specificity">
    <text evidence="4 5">Expressed in the whole plant, except roots. Present in etiolated seedlings.</text>
</comment>
<comment type="disruption phenotype">
    <text evidence="5">Altered response to blue light (BL) and abscisic acid (ABA).</text>
</comment>
<comment type="similarity">
    <text evidence="2">Belongs to the NFYA/HAP2 subunit family.</text>
</comment>
<proteinExistence type="evidence at transcript level"/>
<gene>
    <name type="primary">NFYA5</name>
    <name type="ordered locus">At1g54160</name>
    <name type="ORF">F15I1.26</name>
</gene>
<accession>Q9SYH4</accession>
<sequence>MQVFQRKEDSSWGNSMPTTNSNIQGSESFSLTKDMIMSTTQLPAMKHSGLQLQNQDSTSSQSTEEESGGGEVASFGEYKRYGCSIVNNNLSGYIENLGKPIENYTKSITTSSMVSQDSVFPAPTSGQISWSLQCAETSHFNGFLAPEYASTPTALPHLEMMGLVSSRVPLPHHIQENEPIFVNAKQYHAILRRRKHRAKLEAQNKLIKCRKPYLHESRHLHALKRARGSGGRFLNTKKLQESSNSLCSSQMANGQNFSMSPHGGGSGIGSSSISPSSNSNCINMFQNPQFRFSGYPSTHHASALMSGT</sequence>
<organism>
    <name type="scientific">Arabidopsis thaliana</name>
    <name type="common">Mouse-ear cress</name>
    <dbReference type="NCBI Taxonomy" id="3702"/>
    <lineage>
        <taxon>Eukaryota</taxon>
        <taxon>Viridiplantae</taxon>
        <taxon>Streptophyta</taxon>
        <taxon>Embryophyta</taxon>
        <taxon>Tracheophyta</taxon>
        <taxon>Spermatophyta</taxon>
        <taxon>Magnoliopsida</taxon>
        <taxon>eudicotyledons</taxon>
        <taxon>Gunneridae</taxon>
        <taxon>Pentapetalae</taxon>
        <taxon>rosids</taxon>
        <taxon>malvids</taxon>
        <taxon>Brassicales</taxon>
        <taxon>Brassicaceae</taxon>
        <taxon>Camelineae</taxon>
        <taxon>Arabidopsis</taxon>
    </lineage>
</organism>
<feature type="chain" id="PRO_0000198775" description="Nuclear transcription factor Y subunit A-5">
    <location>
        <begin position="1"/>
        <end position="308"/>
    </location>
</feature>
<feature type="DNA-binding region" description="NFYA/HAP2-type" evidence="2">
    <location>
        <begin position="211"/>
        <end position="236"/>
    </location>
</feature>
<feature type="region of interest" description="Disordered" evidence="3">
    <location>
        <begin position="1"/>
        <end position="26"/>
    </location>
</feature>
<feature type="region of interest" description="Disordered" evidence="3">
    <location>
        <begin position="49"/>
        <end position="71"/>
    </location>
</feature>
<feature type="region of interest" description="Disordered" evidence="3">
    <location>
        <begin position="251"/>
        <end position="273"/>
    </location>
</feature>
<feature type="short sequence motif" description="Subunit association domain (SAD)">
    <location>
        <begin position="181"/>
        <end position="204"/>
    </location>
</feature>
<feature type="compositionally biased region" description="Basic and acidic residues" evidence="3">
    <location>
        <begin position="1"/>
        <end position="10"/>
    </location>
</feature>
<feature type="compositionally biased region" description="Polar residues" evidence="3">
    <location>
        <begin position="11"/>
        <end position="26"/>
    </location>
</feature>
<evidence type="ECO:0000250" key="1"/>
<evidence type="ECO:0000255" key="2">
    <source>
        <dbReference type="PROSITE-ProRule" id="PRU00966"/>
    </source>
</evidence>
<evidence type="ECO:0000256" key="3">
    <source>
        <dbReference type="SAM" id="MobiDB-lite"/>
    </source>
</evidence>
<evidence type="ECO:0000269" key="4">
    <source>
    </source>
</evidence>
<evidence type="ECO:0000269" key="5">
    <source>
    </source>
</evidence>
<evidence type="ECO:0000305" key="6"/>
<reference key="1">
    <citation type="journal article" date="2000" name="Nature">
        <title>Sequence and analysis of chromosome 1 of the plant Arabidopsis thaliana.</title>
        <authorList>
            <person name="Theologis A."/>
            <person name="Ecker J.R."/>
            <person name="Palm C.J."/>
            <person name="Federspiel N.A."/>
            <person name="Kaul S."/>
            <person name="White O."/>
            <person name="Alonso J."/>
            <person name="Altafi H."/>
            <person name="Araujo R."/>
            <person name="Bowman C.L."/>
            <person name="Brooks S.Y."/>
            <person name="Buehler E."/>
            <person name="Chan A."/>
            <person name="Chao Q."/>
            <person name="Chen H."/>
            <person name="Cheuk R.F."/>
            <person name="Chin C.W."/>
            <person name="Chung M.K."/>
            <person name="Conn L."/>
            <person name="Conway A.B."/>
            <person name="Conway A.R."/>
            <person name="Creasy T.H."/>
            <person name="Dewar K."/>
            <person name="Dunn P."/>
            <person name="Etgu P."/>
            <person name="Feldblyum T.V."/>
            <person name="Feng J.-D."/>
            <person name="Fong B."/>
            <person name="Fujii C.Y."/>
            <person name="Gill J.E."/>
            <person name="Goldsmith A.D."/>
            <person name="Haas B."/>
            <person name="Hansen N.F."/>
            <person name="Hughes B."/>
            <person name="Huizar L."/>
            <person name="Hunter J.L."/>
            <person name="Jenkins J."/>
            <person name="Johnson-Hopson C."/>
            <person name="Khan S."/>
            <person name="Khaykin E."/>
            <person name="Kim C.J."/>
            <person name="Koo H.L."/>
            <person name="Kremenetskaia I."/>
            <person name="Kurtz D.B."/>
            <person name="Kwan A."/>
            <person name="Lam B."/>
            <person name="Langin-Hooper S."/>
            <person name="Lee A."/>
            <person name="Lee J.M."/>
            <person name="Lenz C.A."/>
            <person name="Li J.H."/>
            <person name="Li Y.-P."/>
            <person name="Lin X."/>
            <person name="Liu S.X."/>
            <person name="Liu Z.A."/>
            <person name="Luros J.S."/>
            <person name="Maiti R."/>
            <person name="Marziali A."/>
            <person name="Militscher J."/>
            <person name="Miranda M."/>
            <person name="Nguyen M."/>
            <person name="Nierman W.C."/>
            <person name="Osborne B.I."/>
            <person name="Pai G."/>
            <person name="Peterson J."/>
            <person name="Pham P.K."/>
            <person name="Rizzo M."/>
            <person name="Rooney T."/>
            <person name="Rowley D."/>
            <person name="Sakano H."/>
            <person name="Salzberg S.L."/>
            <person name="Schwartz J.R."/>
            <person name="Shinn P."/>
            <person name="Southwick A.M."/>
            <person name="Sun H."/>
            <person name="Tallon L.J."/>
            <person name="Tambunga G."/>
            <person name="Toriumi M.J."/>
            <person name="Town C.D."/>
            <person name="Utterback T."/>
            <person name="Van Aken S."/>
            <person name="Vaysberg M."/>
            <person name="Vysotskaia V.S."/>
            <person name="Walker M."/>
            <person name="Wu D."/>
            <person name="Yu G."/>
            <person name="Fraser C.M."/>
            <person name="Venter J.C."/>
            <person name="Davis R.W."/>
        </authorList>
    </citation>
    <scope>NUCLEOTIDE SEQUENCE [LARGE SCALE GENOMIC DNA]</scope>
    <source>
        <strain>cv. Columbia</strain>
    </source>
</reference>
<reference key="2">
    <citation type="journal article" date="2017" name="Plant J.">
        <title>Araport11: a complete reannotation of the Arabidopsis thaliana reference genome.</title>
        <authorList>
            <person name="Cheng C.Y."/>
            <person name="Krishnakumar V."/>
            <person name="Chan A.P."/>
            <person name="Thibaud-Nissen F."/>
            <person name="Schobel S."/>
            <person name="Town C.D."/>
        </authorList>
    </citation>
    <scope>GENOME REANNOTATION</scope>
    <source>
        <strain>cv. Columbia</strain>
    </source>
</reference>
<reference key="3">
    <citation type="journal article" date="2003" name="Science">
        <title>Empirical analysis of transcriptional activity in the Arabidopsis genome.</title>
        <authorList>
            <person name="Yamada K."/>
            <person name="Lim J."/>
            <person name="Dale J.M."/>
            <person name="Chen H."/>
            <person name="Shinn P."/>
            <person name="Palm C.J."/>
            <person name="Southwick A.M."/>
            <person name="Wu H.C."/>
            <person name="Kim C.J."/>
            <person name="Nguyen M."/>
            <person name="Pham P.K."/>
            <person name="Cheuk R.F."/>
            <person name="Karlin-Newmann G."/>
            <person name="Liu S.X."/>
            <person name="Lam B."/>
            <person name="Sakano H."/>
            <person name="Wu T."/>
            <person name="Yu G."/>
            <person name="Miranda M."/>
            <person name="Quach H.L."/>
            <person name="Tripp M."/>
            <person name="Chang C.H."/>
            <person name="Lee J.M."/>
            <person name="Toriumi M.J."/>
            <person name="Chan M.M."/>
            <person name="Tang C.C."/>
            <person name="Onodera C.S."/>
            <person name="Deng J.M."/>
            <person name="Akiyama K."/>
            <person name="Ansari Y."/>
            <person name="Arakawa T."/>
            <person name="Banh J."/>
            <person name="Banno F."/>
            <person name="Bowser L."/>
            <person name="Brooks S.Y."/>
            <person name="Carninci P."/>
            <person name="Chao Q."/>
            <person name="Choy N."/>
            <person name="Enju A."/>
            <person name="Goldsmith A.D."/>
            <person name="Gurjal M."/>
            <person name="Hansen N.F."/>
            <person name="Hayashizaki Y."/>
            <person name="Johnson-Hopson C."/>
            <person name="Hsuan V.W."/>
            <person name="Iida K."/>
            <person name="Karnes M."/>
            <person name="Khan S."/>
            <person name="Koesema E."/>
            <person name="Ishida J."/>
            <person name="Jiang P.X."/>
            <person name="Jones T."/>
            <person name="Kawai J."/>
            <person name="Kamiya A."/>
            <person name="Meyers C."/>
            <person name="Nakajima M."/>
            <person name="Narusaka M."/>
            <person name="Seki M."/>
            <person name="Sakurai T."/>
            <person name="Satou M."/>
            <person name="Tamse R."/>
            <person name="Vaysberg M."/>
            <person name="Wallender E.K."/>
            <person name="Wong C."/>
            <person name="Yamamura Y."/>
            <person name="Yuan S."/>
            <person name="Shinozaki K."/>
            <person name="Davis R.W."/>
            <person name="Theologis A."/>
            <person name="Ecker J.R."/>
        </authorList>
    </citation>
    <scope>NUCLEOTIDE SEQUENCE [LARGE SCALE MRNA]</scope>
    <source>
        <strain>cv. Columbia</strain>
    </source>
</reference>
<reference key="4">
    <citation type="journal article" date="2001" name="Gene">
        <title>Regulation of the CCAAT-binding NF-Y subunits in Arabidopsis thaliana.</title>
        <authorList>
            <person name="Gusmaroli G."/>
            <person name="Tonelli C."/>
            <person name="Mantovani R."/>
        </authorList>
    </citation>
    <scope>TISSUE SPECIFICITY</scope>
</reference>
<reference key="5">
    <citation type="journal article" date="2002" name="Gene">
        <title>Regulation of novel members of the Arabidopsis thaliana CCAAT-binding nuclear factor Y subunits.</title>
        <authorList>
            <person name="Gusmaroli G."/>
            <person name="Tonelli C."/>
            <person name="Mantovani R."/>
        </authorList>
    </citation>
    <scope>GENE FAMILY</scope>
    <scope>NOMENCLATURE</scope>
</reference>
<reference key="6">
    <citation type="journal article" date="2007" name="Plant Physiol.">
        <title>The GCR1, GPA1, PRN1, NF-Y signal chain mediates both blue light and abscisic acid responses in Arabidopsis.</title>
        <authorList>
            <person name="Warpeha K.M."/>
            <person name="Upadhyay S."/>
            <person name="Yeh J."/>
            <person name="Adamiak J."/>
            <person name="Hawkins S.I."/>
            <person name="Lapik Y.R."/>
            <person name="Anderson M.B."/>
            <person name="Kaufman L.S."/>
        </authorList>
    </citation>
    <scope>FUNCTION</scope>
    <scope>DISRUPTION PHENOTYPE</scope>
    <scope>TISSUE SPECIFICITY</scope>
    <source>
        <strain>cv. Columbia</strain>
        <strain>cv. Wassilewskija</strain>
    </source>
</reference>
<protein>
    <recommendedName>
        <fullName>Nuclear transcription factor Y subunit A-5</fullName>
        <shortName>AtNF-YA-5</shortName>
    </recommendedName>
</protein>
<name>NFYA5_ARATH</name>
<keyword id="KW-0938">Abscisic acid signaling pathway</keyword>
<keyword id="KW-0010">Activator</keyword>
<keyword id="KW-0238">DNA-binding</keyword>
<keyword id="KW-0539">Nucleus</keyword>
<keyword id="KW-1185">Reference proteome</keyword>
<keyword id="KW-0804">Transcription</keyword>
<keyword id="KW-0805">Transcription regulation</keyword>
<dbReference type="EMBL" id="AC006577">
    <property type="protein sequence ID" value="AAD25790.1"/>
    <property type="molecule type" value="Genomic_DNA"/>
</dbReference>
<dbReference type="EMBL" id="CP002684">
    <property type="protein sequence ID" value="AEE33056.1"/>
    <property type="molecule type" value="Genomic_DNA"/>
</dbReference>
<dbReference type="EMBL" id="AF386957">
    <property type="protein sequence ID" value="AAK62402.1"/>
    <property type="molecule type" value="mRNA"/>
</dbReference>
<dbReference type="EMBL" id="AY081445">
    <property type="protein sequence ID" value="AAM10007.1"/>
    <property type="molecule type" value="mRNA"/>
</dbReference>
<dbReference type="PIR" id="G96582">
    <property type="entry name" value="G96582"/>
</dbReference>
<dbReference type="RefSeq" id="NP_175818.1">
    <property type="nucleotide sequence ID" value="NM_104294.3"/>
</dbReference>
<dbReference type="SMR" id="Q9SYH4"/>
<dbReference type="BioGRID" id="27081">
    <property type="interactions" value="9"/>
</dbReference>
<dbReference type="FunCoup" id="Q9SYH4">
    <property type="interactions" value="3"/>
</dbReference>
<dbReference type="IntAct" id="Q9SYH4">
    <property type="interactions" value="4"/>
</dbReference>
<dbReference type="STRING" id="3702.Q9SYH4"/>
<dbReference type="PaxDb" id="3702-AT1G54160.1"/>
<dbReference type="ProteomicsDB" id="250559"/>
<dbReference type="EnsemblPlants" id="AT1G54160.1">
    <property type="protein sequence ID" value="AT1G54160.1"/>
    <property type="gene ID" value="AT1G54160"/>
</dbReference>
<dbReference type="GeneID" id="841856"/>
<dbReference type="Gramene" id="AT1G54160.1">
    <property type="protein sequence ID" value="AT1G54160.1"/>
    <property type="gene ID" value="AT1G54160"/>
</dbReference>
<dbReference type="KEGG" id="ath:AT1G54160"/>
<dbReference type="Araport" id="AT1G54160"/>
<dbReference type="TAIR" id="AT1G54160">
    <property type="gene designation" value="NF-YA5"/>
</dbReference>
<dbReference type="eggNOG" id="KOG1561">
    <property type="taxonomic scope" value="Eukaryota"/>
</dbReference>
<dbReference type="HOGENOM" id="CLU_058712_2_0_1"/>
<dbReference type="InParanoid" id="Q9SYH4"/>
<dbReference type="OMA" id="CSSQMAN"/>
<dbReference type="OrthoDB" id="1097733at2759"/>
<dbReference type="PhylomeDB" id="Q9SYH4"/>
<dbReference type="PRO" id="PR:Q9SYH4"/>
<dbReference type="Proteomes" id="UP000006548">
    <property type="component" value="Chromosome 1"/>
</dbReference>
<dbReference type="ExpressionAtlas" id="Q9SYH4">
    <property type="expression patterns" value="baseline and differential"/>
</dbReference>
<dbReference type="GO" id="GO:0016602">
    <property type="term" value="C:CCAAT-binding factor complex"/>
    <property type="evidence" value="ECO:0007669"/>
    <property type="project" value="InterPro"/>
</dbReference>
<dbReference type="GO" id="GO:0003700">
    <property type="term" value="F:DNA-binding transcription factor activity"/>
    <property type="evidence" value="ECO:0000250"/>
    <property type="project" value="TAIR"/>
</dbReference>
<dbReference type="GO" id="GO:0000976">
    <property type="term" value="F:transcription cis-regulatory region binding"/>
    <property type="evidence" value="ECO:0000353"/>
    <property type="project" value="TAIR"/>
</dbReference>
<dbReference type="GO" id="GO:0009738">
    <property type="term" value="P:abscisic acid-activated signaling pathway"/>
    <property type="evidence" value="ECO:0000315"/>
    <property type="project" value="UniProtKB"/>
</dbReference>
<dbReference type="GO" id="GO:0009785">
    <property type="term" value="P:blue light signaling pathway"/>
    <property type="evidence" value="ECO:0000315"/>
    <property type="project" value="UniProtKB"/>
</dbReference>
<dbReference type="GO" id="GO:0009793">
    <property type="term" value="P:embryo development ending in seed dormancy"/>
    <property type="evidence" value="ECO:0000315"/>
    <property type="project" value="TAIR"/>
</dbReference>
<dbReference type="GO" id="GO:0045892">
    <property type="term" value="P:negative regulation of DNA-templated transcription"/>
    <property type="evidence" value="ECO:0000314"/>
    <property type="project" value="TAIR"/>
</dbReference>
<dbReference type="GO" id="GO:0009414">
    <property type="term" value="P:response to water deprivation"/>
    <property type="evidence" value="ECO:0000315"/>
    <property type="project" value="TAIR"/>
</dbReference>
<dbReference type="GO" id="GO:0048316">
    <property type="term" value="P:seed development"/>
    <property type="evidence" value="ECO:0000315"/>
    <property type="project" value="TAIR"/>
</dbReference>
<dbReference type="GO" id="GO:0010262">
    <property type="term" value="P:somatic embryogenesis"/>
    <property type="evidence" value="ECO:0000315"/>
    <property type="project" value="TAIR"/>
</dbReference>
<dbReference type="Gene3D" id="6.10.250.2430">
    <property type="match status" value="1"/>
</dbReference>
<dbReference type="InterPro" id="IPR018362">
    <property type="entry name" value="CCAAT-binding_factor_CS"/>
</dbReference>
<dbReference type="InterPro" id="IPR001289">
    <property type="entry name" value="NFYA"/>
</dbReference>
<dbReference type="PANTHER" id="PTHR12632">
    <property type="entry name" value="TRANSCRIPTION FACTOR NF-Y ALPHA-RELATED"/>
    <property type="match status" value="1"/>
</dbReference>
<dbReference type="Pfam" id="PF02045">
    <property type="entry name" value="CBFB_NFYA"/>
    <property type="match status" value="1"/>
</dbReference>
<dbReference type="PRINTS" id="PR00616">
    <property type="entry name" value="CCAATSUBUNTB"/>
</dbReference>
<dbReference type="SMART" id="SM00521">
    <property type="entry name" value="CBF"/>
    <property type="match status" value="1"/>
</dbReference>
<dbReference type="PROSITE" id="PS00686">
    <property type="entry name" value="NFYA_HAP2_1"/>
    <property type="match status" value="1"/>
</dbReference>
<dbReference type="PROSITE" id="PS51152">
    <property type="entry name" value="NFYA_HAP2_2"/>
    <property type="match status" value="1"/>
</dbReference>